<reference key="1">
    <citation type="journal article" date="1997" name="Nature">
        <title>The complete genome sequence of the Gram-positive bacterium Bacillus subtilis.</title>
        <authorList>
            <person name="Kunst F."/>
            <person name="Ogasawara N."/>
            <person name="Moszer I."/>
            <person name="Albertini A.M."/>
            <person name="Alloni G."/>
            <person name="Azevedo V."/>
            <person name="Bertero M.G."/>
            <person name="Bessieres P."/>
            <person name="Bolotin A."/>
            <person name="Borchert S."/>
            <person name="Borriss R."/>
            <person name="Boursier L."/>
            <person name="Brans A."/>
            <person name="Braun M."/>
            <person name="Brignell S.C."/>
            <person name="Bron S."/>
            <person name="Brouillet S."/>
            <person name="Bruschi C.V."/>
            <person name="Caldwell B."/>
            <person name="Capuano V."/>
            <person name="Carter N.M."/>
            <person name="Choi S.-K."/>
            <person name="Codani J.-J."/>
            <person name="Connerton I.F."/>
            <person name="Cummings N.J."/>
            <person name="Daniel R.A."/>
            <person name="Denizot F."/>
            <person name="Devine K.M."/>
            <person name="Duesterhoeft A."/>
            <person name="Ehrlich S.D."/>
            <person name="Emmerson P.T."/>
            <person name="Entian K.-D."/>
            <person name="Errington J."/>
            <person name="Fabret C."/>
            <person name="Ferrari E."/>
            <person name="Foulger D."/>
            <person name="Fritz C."/>
            <person name="Fujita M."/>
            <person name="Fujita Y."/>
            <person name="Fuma S."/>
            <person name="Galizzi A."/>
            <person name="Galleron N."/>
            <person name="Ghim S.-Y."/>
            <person name="Glaser P."/>
            <person name="Goffeau A."/>
            <person name="Golightly E.J."/>
            <person name="Grandi G."/>
            <person name="Guiseppi G."/>
            <person name="Guy B.J."/>
            <person name="Haga K."/>
            <person name="Haiech J."/>
            <person name="Harwood C.R."/>
            <person name="Henaut A."/>
            <person name="Hilbert H."/>
            <person name="Holsappel S."/>
            <person name="Hosono S."/>
            <person name="Hullo M.-F."/>
            <person name="Itaya M."/>
            <person name="Jones L.-M."/>
            <person name="Joris B."/>
            <person name="Karamata D."/>
            <person name="Kasahara Y."/>
            <person name="Klaerr-Blanchard M."/>
            <person name="Klein C."/>
            <person name="Kobayashi Y."/>
            <person name="Koetter P."/>
            <person name="Koningstein G."/>
            <person name="Krogh S."/>
            <person name="Kumano M."/>
            <person name="Kurita K."/>
            <person name="Lapidus A."/>
            <person name="Lardinois S."/>
            <person name="Lauber J."/>
            <person name="Lazarevic V."/>
            <person name="Lee S.-M."/>
            <person name="Levine A."/>
            <person name="Liu H."/>
            <person name="Masuda S."/>
            <person name="Mauel C."/>
            <person name="Medigue C."/>
            <person name="Medina N."/>
            <person name="Mellado R.P."/>
            <person name="Mizuno M."/>
            <person name="Moestl D."/>
            <person name="Nakai S."/>
            <person name="Noback M."/>
            <person name="Noone D."/>
            <person name="O'Reilly M."/>
            <person name="Ogawa K."/>
            <person name="Ogiwara A."/>
            <person name="Oudega B."/>
            <person name="Park S.-H."/>
            <person name="Parro V."/>
            <person name="Pohl T.M."/>
            <person name="Portetelle D."/>
            <person name="Porwollik S."/>
            <person name="Prescott A.M."/>
            <person name="Presecan E."/>
            <person name="Pujic P."/>
            <person name="Purnelle B."/>
            <person name="Rapoport G."/>
            <person name="Rey M."/>
            <person name="Reynolds S."/>
            <person name="Rieger M."/>
            <person name="Rivolta C."/>
            <person name="Rocha E."/>
            <person name="Roche B."/>
            <person name="Rose M."/>
            <person name="Sadaie Y."/>
            <person name="Sato T."/>
            <person name="Scanlan E."/>
            <person name="Schleich S."/>
            <person name="Schroeter R."/>
            <person name="Scoffone F."/>
            <person name="Sekiguchi J."/>
            <person name="Sekowska A."/>
            <person name="Seror S.J."/>
            <person name="Serror P."/>
            <person name="Shin B.-S."/>
            <person name="Soldo B."/>
            <person name="Sorokin A."/>
            <person name="Tacconi E."/>
            <person name="Takagi T."/>
            <person name="Takahashi H."/>
            <person name="Takemaru K."/>
            <person name="Takeuchi M."/>
            <person name="Tamakoshi A."/>
            <person name="Tanaka T."/>
            <person name="Terpstra P."/>
            <person name="Tognoni A."/>
            <person name="Tosato V."/>
            <person name="Uchiyama S."/>
            <person name="Vandenbol M."/>
            <person name="Vannier F."/>
            <person name="Vassarotti A."/>
            <person name="Viari A."/>
            <person name="Wambutt R."/>
            <person name="Wedler E."/>
            <person name="Wedler H."/>
            <person name="Weitzenegger T."/>
            <person name="Winters P."/>
            <person name="Wipat A."/>
            <person name="Yamamoto H."/>
            <person name="Yamane K."/>
            <person name="Yasumoto K."/>
            <person name="Yata K."/>
            <person name="Yoshida K."/>
            <person name="Yoshikawa H.-F."/>
            <person name="Zumstein E."/>
            <person name="Yoshikawa H."/>
            <person name="Danchin A."/>
        </authorList>
    </citation>
    <scope>NUCLEOTIDE SEQUENCE [LARGE SCALE GENOMIC DNA]</scope>
    <source>
        <strain>168</strain>
    </source>
</reference>
<protein>
    <recommendedName>
        <fullName>Uncharacterized protein YkzP</fullName>
    </recommendedName>
</protein>
<organism>
    <name type="scientific">Bacillus subtilis (strain 168)</name>
    <dbReference type="NCBI Taxonomy" id="224308"/>
    <lineage>
        <taxon>Bacteria</taxon>
        <taxon>Bacillati</taxon>
        <taxon>Bacillota</taxon>
        <taxon>Bacilli</taxon>
        <taxon>Bacillales</taxon>
        <taxon>Bacillaceae</taxon>
        <taxon>Bacillus</taxon>
    </lineage>
</organism>
<feature type="chain" id="PRO_0000382665" description="Uncharacterized protein YkzP">
    <location>
        <begin position="1"/>
        <end position="51"/>
    </location>
</feature>
<feature type="region of interest" description="Disordered" evidence="1">
    <location>
        <begin position="1"/>
        <end position="51"/>
    </location>
</feature>
<feature type="compositionally biased region" description="Polar residues" evidence="1">
    <location>
        <begin position="11"/>
        <end position="28"/>
    </location>
</feature>
<feature type="compositionally biased region" description="Polar residues" evidence="1">
    <location>
        <begin position="40"/>
        <end position="51"/>
    </location>
</feature>
<name>YKZP_BACSU</name>
<proteinExistence type="predicted"/>
<accession>C0H402</accession>
<gene>
    <name type="primary">ykzP</name>
    <name type="ordered locus">BSU13509</name>
</gene>
<sequence>MKRKAEVNEAIKNNNTPTESMDPNSYKTQYHDDPNFRGANRNSKQGQQGGM</sequence>
<keyword id="KW-1185">Reference proteome</keyword>
<evidence type="ECO:0000256" key="1">
    <source>
        <dbReference type="SAM" id="MobiDB-lite"/>
    </source>
</evidence>
<dbReference type="EMBL" id="AL009126">
    <property type="protein sequence ID" value="CAX52609.1"/>
    <property type="molecule type" value="Genomic_DNA"/>
</dbReference>
<dbReference type="RefSeq" id="YP_003097718.1">
    <property type="nucleotide sequence ID" value="NC_000964.3"/>
</dbReference>
<dbReference type="FunCoup" id="C0H402">
    <property type="interactions" value="5"/>
</dbReference>
<dbReference type="STRING" id="224308.BSU13509"/>
<dbReference type="PaxDb" id="224308-BSU13509"/>
<dbReference type="EnsemblBacteria" id="CAX52609">
    <property type="protein sequence ID" value="CAX52609"/>
    <property type="gene ID" value="BSU_13509"/>
</dbReference>
<dbReference type="GeneID" id="8303057"/>
<dbReference type="KEGG" id="bsu:BSU13509"/>
<dbReference type="PATRIC" id="fig|224308.179.peg.1466"/>
<dbReference type="InParanoid" id="C0H402"/>
<dbReference type="OrthoDB" id="2901819at2"/>
<dbReference type="BioCyc" id="BSUB:BSU13509-MONOMER"/>
<dbReference type="Proteomes" id="UP000001570">
    <property type="component" value="Chromosome"/>
</dbReference>